<proteinExistence type="inferred from homology"/>
<keyword id="KW-0963">Cytoplasm</keyword>
<keyword id="KW-0255">Endonuclease</keyword>
<keyword id="KW-0378">Hydrolase</keyword>
<keyword id="KW-0479">Metal-binding</keyword>
<keyword id="KW-0540">Nuclease</keyword>
<keyword id="KW-1185">Reference proteome</keyword>
<keyword id="KW-0819">tRNA processing</keyword>
<keyword id="KW-0862">Zinc</keyword>
<protein>
    <recommendedName>
        <fullName evidence="1">Ribonuclease P protein component 4</fullName>
        <shortName evidence="1">RNase P component 4</shortName>
        <ecNumber evidence="1">3.1.26.5</ecNumber>
    </recommendedName>
    <alternativeName>
        <fullName evidence="1">Rpp21</fullName>
    </alternativeName>
</protein>
<accession>Q9HRP7</accession>
<reference key="1">
    <citation type="journal article" date="2000" name="Proc. Natl. Acad. Sci. U.S.A.">
        <title>Genome sequence of Halobacterium species NRC-1.</title>
        <authorList>
            <person name="Ng W.V."/>
            <person name="Kennedy S.P."/>
            <person name="Mahairas G.G."/>
            <person name="Berquist B."/>
            <person name="Pan M."/>
            <person name="Shukla H.D."/>
            <person name="Lasky S.R."/>
            <person name="Baliga N.S."/>
            <person name="Thorsson V."/>
            <person name="Sbrogna J."/>
            <person name="Swartzell S."/>
            <person name="Weir D."/>
            <person name="Hall J."/>
            <person name="Dahl T.A."/>
            <person name="Welti R."/>
            <person name="Goo Y.A."/>
            <person name="Leithauser B."/>
            <person name="Keller K."/>
            <person name="Cruz R."/>
            <person name="Danson M.J."/>
            <person name="Hough D.W."/>
            <person name="Maddocks D.G."/>
            <person name="Jablonski P.E."/>
            <person name="Krebs M.P."/>
            <person name="Angevine C.M."/>
            <person name="Dale H."/>
            <person name="Isenbarger T.A."/>
            <person name="Peck R.F."/>
            <person name="Pohlschroder M."/>
            <person name="Spudich J.L."/>
            <person name="Jung K.-H."/>
            <person name="Alam M."/>
            <person name="Freitas T."/>
            <person name="Hou S."/>
            <person name="Daniels C.J."/>
            <person name="Dennis P.P."/>
            <person name="Omer A.D."/>
            <person name="Ebhardt H."/>
            <person name="Lowe T.M."/>
            <person name="Liang P."/>
            <person name="Riley M."/>
            <person name="Hood L."/>
            <person name="DasSarma S."/>
        </authorList>
    </citation>
    <scope>NUCLEOTIDE SEQUENCE [LARGE SCALE GENOMIC DNA]</scope>
    <source>
        <strain>ATCC 700922 / JCM 11081 / NRC-1</strain>
    </source>
</reference>
<comment type="function">
    <text evidence="1">Part of ribonuclease P, a protein complex that generates mature tRNA molecules by cleaving their 5'-ends.</text>
</comment>
<comment type="catalytic activity">
    <reaction evidence="1">
        <text>Endonucleolytic cleavage of RNA, removing 5'-extranucleotides from tRNA precursor.</text>
        <dbReference type="EC" id="3.1.26.5"/>
    </reaction>
</comment>
<comment type="cofactor">
    <cofactor evidence="1">
        <name>Zn(2+)</name>
        <dbReference type="ChEBI" id="CHEBI:29105"/>
    </cofactor>
    <text evidence="1">Binds 1 zinc ion per subunit.</text>
</comment>
<comment type="subunit">
    <text evidence="1">Consists of a catalytic RNA component and at least 4-5 protein subunits.</text>
</comment>
<comment type="subcellular location">
    <subcellularLocation>
        <location evidence="1">Cytoplasm</location>
    </subcellularLocation>
</comment>
<comment type="similarity">
    <text evidence="1">Belongs to the eukaryotic/archaeal RNase P protein component 4 family.</text>
</comment>
<sequence length="93" mass="10469">MASIAAERIDRLHTLARAAARTGDDDRAREYVRLARRLAERNRLTLPPAFRRFTCDDCDAVLVPGRNARVRTRSGHVVVTCDCGTHARYPYTG</sequence>
<organism>
    <name type="scientific">Halobacterium salinarum (strain ATCC 700922 / JCM 11081 / NRC-1)</name>
    <name type="common">Halobacterium halobium</name>
    <dbReference type="NCBI Taxonomy" id="64091"/>
    <lineage>
        <taxon>Archaea</taxon>
        <taxon>Methanobacteriati</taxon>
        <taxon>Methanobacteriota</taxon>
        <taxon>Stenosarchaea group</taxon>
        <taxon>Halobacteria</taxon>
        <taxon>Halobacteriales</taxon>
        <taxon>Halobacteriaceae</taxon>
        <taxon>Halobacterium</taxon>
        <taxon>Halobacterium salinarum NRC-34001</taxon>
    </lineage>
</organism>
<dbReference type="EC" id="3.1.26.5" evidence="1"/>
<dbReference type="EMBL" id="AE004437">
    <property type="protein sequence ID" value="AAG19111.1"/>
    <property type="molecule type" value="Genomic_DNA"/>
</dbReference>
<dbReference type="PIR" id="C84218">
    <property type="entry name" value="C84218"/>
</dbReference>
<dbReference type="RefSeq" id="WP_010902407.1">
    <property type="nucleotide sequence ID" value="NC_002607.1"/>
</dbReference>
<dbReference type="SMR" id="Q9HRP7"/>
<dbReference type="STRING" id="64091.VNG_0599C"/>
<dbReference type="PaxDb" id="64091-VNG_0599C"/>
<dbReference type="KEGG" id="hal:VNG_0599C"/>
<dbReference type="PATRIC" id="fig|64091.14.peg.460"/>
<dbReference type="HOGENOM" id="CLU_079140_3_0_2"/>
<dbReference type="InParanoid" id="Q9HRP7"/>
<dbReference type="OrthoDB" id="10058at2157"/>
<dbReference type="PhylomeDB" id="Q9HRP7"/>
<dbReference type="Proteomes" id="UP000000554">
    <property type="component" value="Chromosome"/>
</dbReference>
<dbReference type="GO" id="GO:0005737">
    <property type="term" value="C:cytoplasm"/>
    <property type="evidence" value="ECO:0007669"/>
    <property type="project" value="UniProtKB-SubCell"/>
</dbReference>
<dbReference type="GO" id="GO:0030677">
    <property type="term" value="C:ribonuclease P complex"/>
    <property type="evidence" value="ECO:0007669"/>
    <property type="project" value="UniProtKB-UniRule"/>
</dbReference>
<dbReference type="GO" id="GO:0004526">
    <property type="term" value="F:ribonuclease P activity"/>
    <property type="evidence" value="ECO:0007669"/>
    <property type="project" value="UniProtKB-UniRule"/>
</dbReference>
<dbReference type="GO" id="GO:0008270">
    <property type="term" value="F:zinc ion binding"/>
    <property type="evidence" value="ECO:0007669"/>
    <property type="project" value="UniProtKB-UniRule"/>
</dbReference>
<dbReference type="GO" id="GO:0001682">
    <property type="term" value="P:tRNA 5'-leader removal"/>
    <property type="evidence" value="ECO:0007669"/>
    <property type="project" value="UniProtKB-UniRule"/>
</dbReference>
<dbReference type="Gene3D" id="6.20.50.20">
    <property type="match status" value="1"/>
</dbReference>
<dbReference type="Gene3D" id="1.20.5.420">
    <property type="entry name" value="Immunoglobulin FC, subunit C"/>
    <property type="match status" value="1"/>
</dbReference>
<dbReference type="HAMAP" id="MF_00757">
    <property type="entry name" value="RNase_P_4"/>
    <property type="match status" value="1"/>
</dbReference>
<dbReference type="InterPro" id="IPR016432">
    <property type="entry name" value="RNP4"/>
</dbReference>
<dbReference type="InterPro" id="IPR007175">
    <property type="entry name" value="Rpr2/Snm1/Rpp21"/>
</dbReference>
<dbReference type="PANTHER" id="PTHR14742:SF0">
    <property type="entry name" value="RIBONUCLEASE P PROTEIN SUBUNIT P21"/>
    <property type="match status" value="1"/>
</dbReference>
<dbReference type="PANTHER" id="PTHR14742">
    <property type="entry name" value="RIBONUCLEASE P SUBUNIT P21"/>
    <property type="match status" value="1"/>
</dbReference>
<dbReference type="Pfam" id="PF04032">
    <property type="entry name" value="Rpr2"/>
    <property type="match status" value="1"/>
</dbReference>
<dbReference type="PIRSF" id="PIRSF004878">
    <property type="entry name" value="RNase_P_4"/>
    <property type="match status" value="1"/>
</dbReference>
<name>RNP4_HALSA</name>
<gene>
    <name evidence="1" type="primary">rnp4</name>
    <name type="ordered locus">VNG_0599C</name>
</gene>
<evidence type="ECO:0000255" key="1">
    <source>
        <dbReference type="HAMAP-Rule" id="MF_00757"/>
    </source>
</evidence>
<feature type="chain" id="PRO_0000153850" description="Ribonuclease P protein component 4">
    <location>
        <begin position="1"/>
        <end position="93"/>
    </location>
</feature>
<feature type="binding site" evidence="1">
    <location>
        <position position="55"/>
    </location>
    <ligand>
        <name>Zn(2+)</name>
        <dbReference type="ChEBI" id="CHEBI:29105"/>
    </ligand>
</feature>
<feature type="binding site" evidence="1">
    <location>
        <position position="58"/>
    </location>
    <ligand>
        <name>Zn(2+)</name>
        <dbReference type="ChEBI" id="CHEBI:29105"/>
    </ligand>
</feature>
<feature type="binding site" evidence="1">
    <location>
        <position position="81"/>
    </location>
    <ligand>
        <name>Zn(2+)</name>
        <dbReference type="ChEBI" id="CHEBI:29105"/>
    </ligand>
</feature>
<feature type="binding site" evidence="1">
    <location>
        <position position="83"/>
    </location>
    <ligand>
        <name>Zn(2+)</name>
        <dbReference type="ChEBI" id="CHEBI:29105"/>
    </ligand>
</feature>